<feature type="signal peptide" evidence="2">
    <location>
        <begin position="1"/>
        <end position="22"/>
    </location>
</feature>
<feature type="peptide" id="PRO_0000023431" description="PDH precursor-related peptide">
    <location>
        <begin position="23"/>
        <end position="55"/>
    </location>
</feature>
<feature type="peptide" id="PRO_0000023432" description="Pigment-dispersing hormone">
    <location>
        <begin position="58"/>
        <end position="75"/>
    </location>
</feature>
<feature type="modified residue" description="Alanine amide" evidence="1">
    <location>
        <position position="75"/>
    </location>
</feature>
<evidence type="ECO:0000250" key="1"/>
<evidence type="ECO:0000255" key="2"/>
<evidence type="ECO:0000305" key="3"/>
<organism>
    <name type="scientific">Carcinus maenas</name>
    <name type="common">Common shore crab</name>
    <name type="synonym">Green crab</name>
    <dbReference type="NCBI Taxonomy" id="6759"/>
    <lineage>
        <taxon>Eukaryota</taxon>
        <taxon>Metazoa</taxon>
        <taxon>Ecdysozoa</taxon>
        <taxon>Arthropoda</taxon>
        <taxon>Crustacea</taxon>
        <taxon>Multicrustacea</taxon>
        <taxon>Malacostraca</taxon>
        <taxon>Eumalacostraca</taxon>
        <taxon>Eucarida</taxon>
        <taxon>Decapoda</taxon>
        <taxon>Pleocyemata</taxon>
        <taxon>Brachyura</taxon>
        <taxon>Eubrachyura</taxon>
        <taxon>Portunoidea</taxon>
        <taxon>Carcinidae</taxon>
        <taxon>Carcinus</taxon>
    </lineage>
</organism>
<dbReference type="EMBL" id="L08635">
    <property type="protein sequence ID" value="AAA27885.1"/>
    <property type="molecule type" value="mRNA"/>
</dbReference>
<dbReference type="PIR" id="JC1406">
    <property type="entry name" value="JC1406"/>
</dbReference>
<dbReference type="SMR" id="Q06202"/>
<dbReference type="GO" id="GO:0005576">
    <property type="term" value="C:extracellular region"/>
    <property type="evidence" value="ECO:0007669"/>
    <property type="project" value="UniProtKB-SubCell"/>
</dbReference>
<dbReference type="GO" id="GO:0045202">
    <property type="term" value="C:synapse"/>
    <property type="evidence" value="ECO:0007669"/>
    <property type="project" value="GOC"/>
</dbReference>
<dbReference type="GO" id="GO:0005179">
    <property type="term" value="F:hormone activity"/>
    <property type="evidence" value="ECO:0007669"/>
    <property type="project" value="UniProtKB-KW"/>
</dbReference>
<dbReference type="GO" id="GO:0007268">
    <property type="term" value="P:chemical synaptic transmission"/>
    <property type="evidence" value="ECO:0007669"/>
    <property type="project" value="UniProtKB-KW"/>
</dbReference>
<dbReference type="GO" id="GO:0009416">
    <property type="term" value="P:response to light stimulus"/>
    <property type="evidence" value="ECO:0007669"/>
    <property type="project" value="InterPro"/>
</dbReference>
<dbReference type="InterPro" id="IPR009396">
    <property type="entry name" value="Pigment_DH"/>
</dbReference>
<dbReference type="Pfam" id="PF06324">
    <property type="entry name" value="Pigment_DH"/>
    <property type="match status" value="1"/>
</dbReference>
<sequence>MRSAVIVTMLVVVALAALLTQGQDLKYQEREMVAELAQQIYRVAQAPWAGAVGPHKRNSELINSILGLPKVMNDAGRR</sequence>
<reference key="1">
    <citation type="journal article" date="1992" name="Biochem. Biophys. Res. Commun.">
        <title>Molecular cloning of crustacean pigment dispersing hormone precursor.</title>
        <authorList>
            <person name="Klein J.M."/>
            <person name="de Kleijn D.P.V."/>
            <person name="Keller R."/>
            <person name="Weidemann W.M."/>
        </authorList>
    </citation>
    <scope>NUCLEOTIDE SEQUENCE [MRNA]</scope>
    <source>
        <tissue>Eyestalk</tissue>
    </source>
</reference>
<name>PDH_CARMA</name>
<protein>
    <recommendedName>
        <fullName>Pigment-dispersing hormone peptides</fullName>
    </recommendedName>
    <component>
        <recommendedName>
            <fullName>PDH precursor-related peptide</fullName>
            <shortName>PRPP</shortName>
        </recommendedName>
    </component>
    <component>
        <recommendedName>
            <fullName>Pigment-dispersing hormone</fullName>
            <shortName>PDH</shortName>
        </recommendedName>
        <alternativeName>
            <fullName>Light-adapting distal retinal pigment hormone</fullName>
            <shortName>DRPH</shortName>
        </alternativeName>
    </component>
</protein>
<comment type="function">
    <text>The pigment-dispersing hormone causes the migration of the distal retinal pigment into the proximal end of the pigment chromatophore cells and thus decreases the amount of light entering the retinulas. May also function as a neurotransmitter and/or neuromodulator.</text>
</comment>
<comment type="subcellular location">
    <subcellularLocation>
        <location>Secreted</location>
    </subcellularLocation>
</comment>
<comment type="tissue specificity">
    <text>Expressed in eyestalk tissue and cerebral ganglia.</text>
</comment>
<comment type="similarity">
    <text evidence="3">Belongs to the arthropod PDH family.</text>
</comment>
<accession>Q06202</accession>
<keyword id="KW-0027">Amidation</keyword>
<keyword id="KW-0165">Cleavage on pair of basic residues</keyword>
<keyword id="KW-0372">Hormone</keyword>
<keyword id="KW-0529">Neurotransmitter</keyword>
<keyword id="KW-0964">Secreted</keyword>
<keyword id="KW-0732">Signal</keyword>
<proteinExistence type="evidence at transcript level"/>